<proteinExistence type="evidence at protein level"/>
<organism>
    <name type="scientific">Bos taurus</name>
    <name type="common">Bovine</name>
    <dbReference type="NCBI Taxonomy" id="9913"/>
    <lineage>
        <taxon>Eukaryota</taxon>
        <taxon>Metazoa</taxon>
        <taxon>Chordata</taxon>
        <taxon>Craniata</taxon>
        <taxon>Vertebrata</taxon>
        <taxon>Euteleostomi</taxon>
        <taxon>Mammalia</taxon>
        <taxon>Eutheria</taxon>
        <taxon>Laurasiatheria</taxon>
        <taxon>Artiodactyla</taxon>
        <taxon>Ruminantia</taxon>
        <taxon>Pecora</taxon>
        <taxon>Bovidae</taxon>
        <taxon>Bovinae</taxon>
        <taxon>Bos</taxon>
    </lineage>
</organism>
<comment type="function">
    <text>Initiates the extrinsic pathway of blood coagulation. Serine protease that circulates in the blood in a zymogen form. Factor VII is converted to factor VIIa by factor Xa, factor XIIa, factor IXa, or thrombin by minor proteolysis. In the presence of tissue factor and calcium ions, factor VIIa then converts factor X to factor Xa by limited proteolysis. Factor VIIa also converts factor IX to factor IXa in the presence of tissue factor and calcium.</text>
</comment>
<comment type="catalytic activity">
    <reaction>
        <text>Selective cleavage of Arg-|-Ile bond in factor X to form factor Xa.</text>
        <dbReference type="EC" id="3.4.21.21"/>
    </reaction>
</comment>
<comment type="subunit">
    <text>Heterodimer of a light chain and a heavy chain linked by a disulfide bond.</text>
</comment>
<comment type="subcellular location">
    <subcellularLocation>
        <location>Secreted</location>
    </subcellularLocation>
</comment>
<comment type="tissue specificity">
    <text>Plasma.</text>
</comment>
<comment type="PTM">
    <text>The vitamin K-dependent, enzymatic carboxylation of some glutamate residues allows the modified protein to bind calcium.</text>
</comment>
<comment type="PTM">
    <text evidence="1">O-glycosylated. O-fucosylated by POFUT1 on a conserved serine or threonine residue found in the consensus sequence C2-X(4,5)-[S/T]-C3 of EGF domains, where C2 and C3 are the second and third conserved cysteines.</text>
</comment>
<comment type="PTM">
    <text evidence="1">Can be either O-glucosylated or O-xylosylated at Ser-92 by POGLUT1.</text>
</comment>
<comment type="similarity">
    <text evidence="4">Belongs to the peptidase S1 family.</text>
</comment>
<sequence>MLSQAWALALLCFLLSLWGSLPAVFLPQEQALSILHRPRRANGFLEELLPGSLERECREELCSFEEAHEIFRNEERTRQFWVSYNDGDQCASSPCQNGGSCEDQLRSYICFCPDGFEGRNCETDKQSQLICANDNGGCEQYCGADPGAGRFCWCHEGYALQADGVSCAPTVEYPCGKIPVLEKRNGSKPQGRIVGGHVCPKGECPWQAMLKLNGALLCGGTLVGPAWVVSAAHCFERLRSRGNLTAVLGEHDLSRVEGPEQERRVAQIIVPKQYVPGQTDHDVALLQLAQPVALGDHVAPLCLPDPDFADQTLAFVRFSAVSGWGQLLERGVTARKLMVVLVPRLLTQDCLQQSRQRPGGPVVTDNMFCAGYSDGSKDACKGDSGGPHATRFRGTWFLTGVVSWGEGCAAAGHFGIYTRVSRYTAWLRQLMGHPPSRQGFFQVPLLP</sequence>
<feature type="signal peptide" evidence="2">
    <location>
        <begin position="1"/>
        <end position="23"/>
    </location>
</feature>
<feature type="propeptide" id="PRO_0000240126" evidence="7">
    <location>
        <begin position="24"/>
        <end position="40"/>
    </location>
</feature>
<feature type="chain" id="PRO_0000027727" description="Factor VII light chain" evidence="7">
    <location>
        <begin position="41"/>
        <end position="192"/>
    </location>
</feature>
<feature type="chain" id="PRO_0000027728" description="Factor VII heavy chain" evidence="7">
    <location>
        <begin position="193"/>
        <end position="447"/>
    </location>
</feature>
<feature type="domain" description="Gla" evidence="5">
    <location>
        <begin position="41"/>
        <end position="85"/>
    </location>
</feature>
<feature type="domain" description="EGF-like 1; calcium-binding" evidence="3">
    <location>
        <begin position="86"/>
        <end position="122"/>
    </location>
</feature>
<feature type="domain" description="EGF-like 2" evidence="3">
    <location>
        <begin position="127"/>
        <end position="168"/>
    </location>
</feature>
<feature type="domain" description="Peptidase S1" evidence="4">
    <location>
        <begin position="193"/>
        <end position="432"/>
    </location>
</feature>
<feature type="active site" description="Charge relay system" evidence="1">
    <location>
        <position position="233"/>
    </location>
</feature>
<feature type="active site" description="Charge relay system" evidence="1">
    <location>
        <position position="282"/>
    </location>
</feature>
<feature type="active site" description="Charge relay system" evidence="1">
    <location>
        <position position="384"/>
    </location>
</feature>
<feature type="binding site" evidence="1">
    <location>
        <position position="378"/>
    </location>
    <ligand>
        <name>substrate</name>
    </ligand>
</feature>
<feature type="site" description="Important for S-92 for O-xylosylation" evidence="1">
    <location>
        <position position="93"/>
    </location>
</feature>
<feature type="site" description="Cleavage; by factor Xa, factor XIIa, factor IXa, or thrombin">
    <location>
        <begin position="192"/>
        <end position="193"/>
    </location>
</feature>
<feature type="modified residue" description="4-carboxyglutamate" evidence="5 7">
    <location>
        <position position="46"/>
    </location>
</feature>
<feature type="modified residue" description="4-carboxyglutamate" evidence="5 7">
    <location>
        <position position="47"/>
    </location>
</feature>
<feature type="modified residue" description="4-carboxyglutamate" evidence="5 7">
    <location>
        <position position="54"/>
    </location>
</feature>
<feature type="modified residue" description="4-carboxyglutamate" evidence="5 7">
    <location>
        <position position="56"/>
    </location>
</feature>
<feature type="modified residue" description="4-carboxyglutamate" evidence="5 7">
    <location>
        <position position="59"/>
    </location>
</feature>
<feature type="modified residue" description="4-carboxyglutamate" evidence="5 7">
    <location>
        <position position="60"/>
    </location>
</feature>
<feature type="modified residue" description="4-carboxyglutamate" evidence="5 7">
    <location>
        <position position="65"/>
    </location>
</feature>
<feature type="modified residue" description="4-carboxyglutamate" evidence="5 7">
    <location>
        <position position="66"/>
    </location>
</feature>
<feature type="modified residue" description="4-carboxyglutamate" evidence="5 7">
    <location>
        <position position="69"/>
    </location>
</feature>
<feature type="modified residue" description="4-carboxyglutamate" evidence="5 7">
    <location>
        <position position="74"/>
    </location>
</feature>
<feature type="modified residue" description="4-carboxyglutamate" evidence="5 7">
    <location>
        <position position="75"/>
    </location>
</feature>
<feature type="glycosylation site" description="O-linked (Glc...) serine" evidence="6 8">
    <location>
        <position position="92"/>
    </location>
</feature>
<feature type="glycosylation site" description="O-linked (Glc...) serine; alternate" evidence="1 6 8">
    <location>
        <position position="92"/>
    </location>
</feature>
<feature type="glycosylation site" description="O-linked (Xyl...) serine; alternate" evidence="1 6 8">
    <location>
        <position position="92"/>
    </location>
</feature>
<feature type="glycosylation site" description="O-linked (Fuc) serine" evidence="1">
    <location>
        <position position="100"/>
    </location>
</feature>
<feature type="glycosylation site" description="N-linked (GlcNAc...) asparagine" evidence="7">
    <location>
        <position position="185"/>
    </location>
</feature>
<feature type="glycosylation site" description="N-linked (GlcNAc...) asparagine" evidence="7">
    <location>
        <position position="243"/>
    </location>
</feature>
<feature type="disulfide bond" evidence="1">
    <location>
        <begin position="57"/>
        <end position="62"/>
    </location>
</feature>
<feature type="disulfide bond" evidence="1">
    <location>
        <begin position="90"/>
        <end position="101"/>
    </location>
</feature>
<feature type="disulfide bond" evidence="1">
    <location>
        <begin position="95"/>
        <end position="110"/>
    </location>
</feature>
<feature type="disulfide bond" evidence="1">
    <location>
        <begin position="112"/>
        <end position="121"/>
    </location>
</feature>
<feature type="disulfide bond" evidence="1">
    <location>
        <begin position="131"/>
        <end position="142"/>
    </location>
</feature>
<feature type="disulfide bond" evidence="1">
    <location>
        <begin position="138"/>
        <end position="152"/>
    </location>
</feature>
<feature type="disulfide bond" evidence="1">
    <location>
        <begin position="154"/>
        <end position="167"/>
    </location>
</feature>
<feature type="disulfide bond" evidence="1">
    <location>
        <begin position="175"/>
        <end position="302"/>
    </location>
</feature>
<feature type="disulfide bond" evidence="1">
    <location>
        <begin position="199"/>
        <end position="204"/>
    </location>
</feature>
<feature type="disulfide bond" evidence="1">
    <location>
        <begin position="218"/>
        <end position="234"/>
    </location>
</feature>
<feature type="disulfide bond" evidence="1">
    <location>
        <begin position="350"/>
        <end position="369"/>
    </location>
</feature>
<feature type="disulfide bond" evidence="1">
    <location>
        <begin position="380"/>
        <end position="408"/>
    </location>
</feature>
<evidence type="ECO:0000250" key="1"/>
<evidence type="ECO:0000255" key="2"/>
<evidence type="ECO:0000255" key="3">
    <source>
        <dbReference type="PROSITE-ProRule" id="PRU00076"/>
    </source>
</evidence>
<evidence type="ECO:0000255" key="4">
    <source>
        <dbReference type="PROSITE-ProRule" id="PRU00274"/>
    </source>
</evidence>
<evidence type="ECO:0000255" key="5">
    <source>
        <dbReference type="PROSITE-ProRule" id="PRU00463"/>
    </source>
</evidence>
<evidence type="ECO:0000269" key="6">
    <source>
    </source>
</evidence>
<evidence type="ECO:0000269" key="7">
    <source>
    </source>
</evidence>
<evidence type="ECO:0000269" key="8">
    <source>
    </source>
</evidence>
<protein>
    <recommendedName>
        <fullName>Coagulation factor VII</fullName>
        <ecNumber>3.4.21.21</ecNumber>
    </recommendedName>
    <alternativeName>
        <fullName>Serum prothrombin conversion accelerator</fullName>
    </alternativeName>
    <component>
        <recommendedName>
            <fullName>Factor VII light chain</fullName>
        </recommendedName>
    </component>
    <component>
        <recommendedName>
            <fullName>Factor VII heavy chain</fullName>
        </recommendedName>
    </component>
</protein>
<keyword id="KW-0094">Blood coagulation</keyword>
<keyword id="KW-0106">Calcium</keyword>
<keyword id="KW-0165">Cleavage on pair of basic residues</keyword>
<keyword id="KW-0903">Direct protein sequencing</keyword>
<keyword id="KW-1015">Disulfide bond</keyword>
<keyword id="KW-0245">EGF-like domain</keyword>
<keyword id="KW-0301">Gamma-carboxyglutamic acid</keyword>
<keyword id="KW-0325">Glycoprotein</keyword>
<keyword id="KW-0356">Hemostasis</keyword>
<keyword id="KW-0378">Hydrolase</keyword>
<keyword id="KW-0645">Protease</keyword>
<keyword id="KW-1185">Reference proteome</keyword>
<keyword id="KW-0677">Repeat</keyword>
<keyword id="KW-0964">Secreted</keyword>
<keyword id="KW-0720">Serine protease</keyword>
<keyword id="KW-0732">Signal</keyword>
<keyword id="KW-0865">Zymogen</keyword>
<gene>
    <name type="primary">F7</name>
</gene>
<reference key="1">
    <citation type="journal article" date="2005" name="BMC Genomics">
        <title>Characterization of 954 bovine full-CDS cDNA sequences.</title>
        <authorList>
            <person name="Harhay G.P."/>
            <person name="Sonstegard T.S."/>
            <person name="Keele J.W."/>
            <person name="Heaton M.P."/>
            <person name="Clawson M.L."/>
            <person name="Snelling W.M."/>
            <person name="Wiedmann R.T."/>
            <person name="Van Tassell C.P."/>
            <person name="Smith T.P.L."/>
        </authorList>
    </citation>
    <scope>NUCLEOTIDE SEQUENCE [LARGE SCALE MRNA]</scope>
</reference>
<reference key="2">
    <citation type="submission" date="2007-06" db="EMBL/GenBank/DDBJ databases">
        <authorList>
            <consortium name="NIH - Mammalian Gene Collection (MGC) project"/>
        </authorList>
    </citation>
    <scope>NUCLEOTIDE SEQUENCE [LARGE SCALE MRNA]</scope>
    <source>
        <strain>Crossbred X Angus</strain>
        <tissue>Ileum</tissue>
    </source>
</reference>
<reference key="3">
    <citation type="journal article" date="1988" name="J. Biol. Chem.">
        <title>Bovine factor VII. Its purification and complete amino acid sequence.</title>
        <authorList>
            <person name="Takeya H."/>
            <person name="Kawabata S."/>
            <person name="Nakagawa K."/>
            <person name="Yamamichi Y."/>
            <person name="Miyata T."/>
            <person name="Iwanaga S."/>
        </authorList>
    </citation>
    <scope>PROTEIN SEQUENCE OF 41-447</scope>
    <scope>GAMMA-CARBOXYGLUTAMATION AT GLU-46; GLU-47; GLU-54; GLU-56; GLU-59; GLU-60; GLU-65; GLU-66; GLU-69; GLU-74 AND GLU-75</scope>
</reference>
<reference key="4">
    <citation type="journal article" date="1988" name="J. Biochem.">
        <title>A new trisaccharide sugar chain linked to a serine residue in bovine blood coagulation factors VII and IX.</title>
        <authorList>
            <person name="Hase S."/>
            <person name="Kawabata S."/>
            <person name="Nishimura H."/>
            <person name="Takeya H."/>
            <person name="Sueyoshi T."/>
            <person name="Miyata T."/>
            <person name="Iwanaga S."/>
            <person name="Takao T."/>
            <person name="Shimonishi Y."/>
            <person name="Ikenaka T."/>
        </authorList>
    </citation>
    <scope>GLYCOSYLATION AT SER-92</scope>
    <scope>STRUCTURE OF CARBOHYDRATE ON SER-92</scope>
</reference>
<reference key="5">
    <citation type="journal article" date="1990" name="Adv. Exp. Med. Biol.">
        <title>A new trisaccharide sugar chain linked to a serine residue in the first EGF-like domain of clotting factors VII and IX and protein Z.</title>
        <authorList>
            <person name="Iwanaga S."/>
            <person name="Nishimura H."/>
            <person name="Kawabata S."/>
            <person name="Kisiel W."/>
            <person name="Hase S."/>
            <person name="Ikenaka T."/>
        </authorList>
    </citation>
    <scope>GLYCOSYLATION AT SER-92</scope>
    <scope>STRUCTURE OF CARBOHYDRATE ON SER-92</scope>
</reference>
<name>FA7_BOVIN</name>
<dbReference type="EC" id="3.4.21.21"/>
<dbReference type="EMBL" id="BT021584">
    <property type="protein sequence ID" value="AAX46431.1"/>
    <property type="molecule type" value="mRNA"/>
</dbReference>
<dbReference type="EMBL" id="BC146045">
    <property type="protein sequence ID" value="AAI46046.1"/>
    <property type="molecule type" value="mRNA"/>
</dbReference>
<dbReference type="PIR" id="A31979">
    <property type="entry name" value="KFBO7"/>
</dbReference>
<dbReference type="RefSeq" id="NP_001029978.1">
    <property type="nucleotide sequence ID" value="NM_001034806.1"/>
</dbReference>
<dbReference type="SMR" id="P22457"/>
<dbReference type="ELM" id="P22457"/>
<dbReference type="FunCoup" id="P22457">
    <property type="interactions" value="146"/>
</dbReference>
<dbReference type="STRING" id="9913.ENSBTAP00000009746"/>
<dbReference type="MEROPS" id="S01.215"/>
<dbReference type="GlyCosmos" id="P22457">
    <property type="glycosylation" value="4 sites, No reported glycans"/>
</dbReference>
<dbReference type="GlyGen" id="P22457">
    <property type="glycosylation" value="4 sites"/>
</dbReference>
<dbReference type="iPTMnet" id="P22457"/>
<dbReference type="PaxDb" id="9913-ENSBTAP00000009746"/>
<dbReference type="GeneID" id="617960"/>
<dbReference type="KEGG" id="bta:617960"/>
<dbReference type="CTD" id="2155"/>
<dbReference type="VEuPathDB" id="HostDB:ENSBTAG00000007411"/>
<dbReference type="eggNOG" id="ENOG502QRGI">
    <property type="taxonomic scope" value="Eukaryota"/>
</dbReference>
<dbReference type="HOGENOM" id="CLU_006842_19_5_1"/>
<dbReference type="InParanoid" id="P22457"/>
<dbReference type="OMA" id="QGRNCET"/>
<dbReference type="OrthoDB" id="10004439at2759"/>
<dbReference type="TreeFam" id="TF327329"/>
<dbReference type="Reactome" id="R-BTA-140834">
    <property type="pathway name" value="Extrinsic Pathway of Fibrin Clot Formation"/>
</dbReference>
<dbReference type="Reactome" id="R-BTA-159740">
    <property type="pathway name" value="Gamma-carboxylation of protein precursors"/>
</dbReference>
<dbReference type="Reactome" id="R-BTA-159763">
    <property type="pathway name" value="Transport of gamma-carboxylated protein precursors from the endoplasmic reticulum to the Golgi apparatus"/>
</dbReference>
<dbReference type="Reactome" id="R-BTA-159782">
    <property type="pathway name" value="Removal of aminoterminal propeptides from gamma-carboxylated proteins"/>
</dbReference>
<dbReference type="Proteomes" id="UP000009136">
    <property type="component" value="Chromosome 12"/>
</dbReference>
<dbReference type="Bgee" id="ENSBTAG00000007411">
    <property type="expression patterns" value="Expressed in cortex of kidney and 35 other cell types or tissues"/>
</dbReference>
<dbReference type="GO" id="GO:0005615">
    <property type="term" value="C:extracellular space"/>
    <property type="evidence" value="ECO:0000318"/>
    <property type="project" value="GO_Central"/>
</dbReference>
<dbReference type="GO" id="GO:0005509">
    <property type="term" value="F:calcium ion binding"/>
    <property type="evidence" value="ECO:0007669"/>
    <property type="project" value="InterPro"/>
</dbReference>
<dbReference type="GO" id="GO:0004252">
    <property type="term" value="F:serine-type endopeptidase activity"/>
    <property type="evidence" value="ECO:0000318"/>
    <property type="project" value="GO_Central"/>
</dbReference>
<dbReference type="GO" id="GO:0007596">
    <property type="term" value="P:blood coagulation"/>
    <property type="evidence" value="ECO:0000318"/>
    <property type="project" value="GO_Central"/>
</dbReference>
<dbReference type="GO" id="GO:0002690">
    <property type="term" value="P:positive regulation of leukocyte chemotaxis"/>
    <property type="evidence" value="ECO:0000318"/>
    <property type="project" value="GO_Central"/>
</dbReference>
<dbReference type="GO" id="GO:0006508">
    <property type="term" value="P:proteolysis"/>
    <property type="evidence" value="ECO:0007669"/>
    <property type="project" value="UniProtKB-KW"/>
</dbReference>
<dbReference type="CDD" id="cd00054">
    <property type="entry name" value="EGF_CA"/>
    <property type="match status" value="1"/>
</dbReference>
<dbReference type="CDD" id="cd00190">
    <property type="entry name" value="Tryp_SPc"/>
    <property type="match status" value="1"/>
</dbReference>
<dbReference type="FunFam" id="2.10.25.10:FF:000259">
    <property type="entry name" value="Coagulation factor VII"/>
    <property type="match status" value="1"/>
</dbReference>
<dbReference type="FunFam" id="2.10.25.10:FF:000420">
    <property type="entry name" value="Coagulation factor VII"/>
    <property type="match status" value="1"/>
</dbReference>
<dbReference type="FunFam" id="2.40.10.10:FF:000013">
    <property type="entry name" value="Coagulation factor X"/>
    <property type="match status" value="1"/>
</dbReference>
<dbReference type="FunFam" id="4.10.740.10:FF:000001">
    <property type="entry name" value="vitamin K-dependent protein S"/>
    <property type="match status" value="1"/>
</dbReference>
<dbReference type="Gene3D" id="4.10.740.10">
    <property type="entry name" value="Coagulation Factor IX"/>
    <property type="match status" value="1"/>
</dbReference>
<dbReference type="Gene3D" id="2.10.25.10">
    <property type="entry name" value="Laminin"/>
    <property type="match status" value="2"/>
</dbReference>
<dbReference type="Gene3D" id="2.40.10.10">
    <property type="entry name" value="Trypsin-like serine proteases"/>
    <property type="match status" value="1"/>
</dbReference>
<dbReference type="InterPro" id="IPR017857">
    <property type="entry name" value="Coagulation_fac-like_Gla_dom"/>
</dbReference>
<dbReference type="InterPro" id="IPR001881">
    <property type="entry name" value="EGF-like_Ca-bd_dom"/>
</dbReference>
<dbReference type="InterPro" id="IPR000742">
    <property type="entry name" value="EGF-like_dom"/>
</dbReference>
<dbReference type="InterPro" id="IPR000152">
    <property type="entry name" value="EGF-type_Asp/Asn_hydroxyl_site"/>
</dbReference>
<dbReference type="InterPro" id="IPR018097">
    <property type="entry name" value="EGF_Ca-bd_CS"/>
</dbReference>
<dbReference type="InterPro" id="IPR035972">
    <property type="entry name" value="GLA-like_dom_SF"/>
</dbReference>
<dbReference type="InterPro" id="IPR000294">
    <property type="entry name" value="GLA_domain"/>
</dbReference>
<dbReference type="InterPro" id="IPR012224">
    <property type="entry name" value="Pept_S1A_FX"/>
</dbReference>
<dbReference type="InterPro" id="IPR050442">
    <property type="entry name" value="Peptidase_S1_coag_factors"/>
</dbReference>
<dbReference type="InterPro" id="IPR009003">
    <property type="entry name" value="Peptidase_S1_PA"/>
</dbReference>
<dbReference type="InterPro" id="IPR043504">
    <property type="entry name" value="Peptidase_S1_PA_chymotrypsin"/>
</dbReference>
<dbReference type="InterPro" id="IPR001314">
    <property type="entry name" value="Peptidase_S1A"/>
</dbReference>
<dbReference type="InterPro" id="IPR001254">
    <property type="entry name" value="Trypsin_dom"/>
</dbReference>
<dbReference type="InterPro" id="IPR018114">
    <property type="entry name" value="TRYPSIN_HIS"/>
</dbReference>
<dbReference type="InterPro" id="IPR033116">
    <property type="entry name" value="TRYPSIN_SER"/>
</dbReference>
<dbReference type="PANTHER" id="PTHR24278">
    <property type="entry name" value="COAGULATION FACTOR"/>
    <property type="match status" value="1"/>
</dbReference>
<dbReference type="PANTHER" id="PTHR24278:SF26">
    <property type="entry name" value="COAGULATION FACTOR VII"/>
    <property type="match status" value="1"/>
</dbReference>
<dbReference type="Pfam" id="PF00008">
    <property type="entry name" value="EGF"/>
    <property type="match status" value="1"/>
</dbReference>
<dbReference type="Pfam" id="PF14670">
    <property type="entry name" value="FXa_inhibition"/>
    <property type="match status" value="1"/>
</dbReference>
<dbReference type="Pfam" id="PF00594">
    <property type="entry name" value="Gla"/>
    <property type="match status" value="1"/>
</dbReference>
<dbReference type="Pfam" id="PF00089">
    <property type="entry name" value="Trypsin"/>
    <property type="match status" value="1"/>
</dbReference>
<dbReference type="PIRSF" id="PIRSF001143">
    <property type="entry name" value="Factor_X"/>
    <property type="match status" value="1"/>
</dbReference>
<dbReference type="PRINTS" id="PR00722">
    <property type="entry name" value="CHYMOTRYPSIN"/>
</dbReference>
<dbReference type="PRINTS" id="PR00010">
    <property type="entry name" value="EGFBLOOD"/>
</dbReference>
<dbReference type="PRINTS" id="PR00001">
    <property type="entry name" value="GLABLOOD"/>
</dbReference>
<dbReference type="SMART" id="SM00181">
    <property type="entry name" value="EGF"/>
    <property type="match status" value="2"/>
</dbReference>
<dbReference type="SMART" id="SM00179">
    <property type="entry name" value="EGF_CA"/>
    <property type="match status" value="1"/>
</dbReference>
<dbReference type="SMART" id="SM00069">
    <property type="entry name" value="GLA"/>
    <property type="match status" value="1"/>
</dbReference>
<dbReference type="SMART" id="SM00020">
    <property type="entry name" value="Tryp_SPc"/>
    <property type="match status" value="1"/>
</dbReference>
<dbReference type="SUPFAM" id="SSF57630">
    <property type="entry name" value="GLA-domain"/>
    <property type="match status" value="1"/>
</dbReference>
<dbReference type="SUPFAM" id="SSF50494">
    <property type="entry name" value="Trypsin-like serine proteases"/>
    <property type="match status" value="1"/>
</dbReference>
<dbReference type="PROSITE" id="PS00010">
    <property type="entry name" value="ASX_HYDROXYL"/>
    <property type="match status" value="1"/>
</dbReference>
<dbReference type="PROSITE" id="PS00022">
    <property type="entry name" value="EGF_1"/>
    <property type="match status" value="1"/>
</dbReference>
<dbReference type="PROSITE" id="PS01186">
    <property type="entry name" value="EGF_2"/>
    <property type="match status" value="2"/>
</dbReference>
<dbReference type="PROSITE" id="PS50026">
    <property type="entry name" value="EGF_3"/>
    <property type="match status" value="1"/>
</dbReference>
<dbReference type="PROSITE" id="PS01187">
    <property type="entry name" value="EGF_CA"/>
    <property type="match status" value="1"/>
</dbReference>
<dbReference type="PROSITE" id="PS00011">
    <property type="entry name" value="GLA_1"/>
    <property type="match status" value="1"/>
</dbReference>
<dbReference type="PROSITE" id="PS50998">
    <property type="entry name" value="GLA_2"/>
    <property type="match status" value="1"/>
</dbReference>
<dbReference type="PROSITE" id="PS50240">
    <property type="entry name" value="TRYPSIN_DOM"/>
    <property type="match status" value="1"/>
</dbReference>
<dbReference type="PROSITE" id="PS00134">
    <property type="entry name" value="TRYPSIN_HIS"/>
    <property type="match status" value="1"/>
</dbReference>
<dbReference type="PROSITE" id="PS00135">
    <property type="entry name" value="TRYPSIN_SER"/>
    <property type="match status" value="1"/>
</dbReference>
<accession>P22457</accession>
<accession>A6H6Y5</accession>
<accession>Q58DL3</accession>